<protein>
    <recommendedName>
        <fullName evidence="1">S-adenosylmethionine:tRNA ribosyltransferase-isomerase</fullName>
        <ecNumber evidence="1">2.4.99.17</ecNumber>
    </recommendedName>
    <alternativeName>
        <fullName evidence="1">Queuosine biosynthesis protein QueA</fullName>
    </alternativeName>
</protein>
<comment type="function">
    <text evidence="1">Transfers and isomerizes the ribose moiety from AdoMet to the 7-aminomethyl group of 7-deazaguanine (preQ1-tRNA) to give epoxyqueuosine (oQ-tRNA).</text>
</comment>
<comment type="catalytic activity">
    <reaction evidence="1">
        <text>7-aminomethyl-7-carbaguanosine(34) in tRNA + S-adenosyl-L-methionine = epoxyqueuosine(34) in tRNA + adenine + L-methionine + 2 H(+)</text>
        <dbReference type="Rhea" id="RHEA:32155"/>
        <dbReference type="Rhea" id="RHEA-COMP:10342"/>
        <dbReference type="Rhea" id="RHEA-COMP:18582"/>
        <dbReference type="ChEBI" id="CHEBI:15378"/>
        <dbReference type="ChEBI" id="CHEBI:16708"/>
        <dbReference type="ChEBI" id="CHEBI:57844"/>
        <dbReference type="ChEBI" id="CHEBI:59789"/>
        <dbReference type="ChEBI" id="CHEBI:82833"/>
        <dbReference type="ChEBI" id="CHEBI:194443"/>
        <dbReference type="EC" id="2.4.99.17"/>
    </reaction>
</comment>
<comment type="pathway">
    <text evidence="1">tRNA modification; tRNA-queuosine biosynthesis.</text>
</comment>
<comment type="subunit">
    <text evidence="1">Monomer.</text>
</comment>
<comment type="subcellular location">
    <subcellularLocation>
        <location evidence="1">Cytoplasm</location>
    </subcellularLocation>
</comment>
<comment type="similarity">
    <text evidence="1">Belongs to the QueA family.</text>
</comment>
<reference key="1">
    <citation type="submission" date="2007-05" db="EMBL/GenBank/DDBJ databases">
        <title>Complete sequence of Pseudomonas putida F1.</title>
        <authorList>
            <consortium name="US DOE Joint Genome Institute"/>
            <person name="Copeland A."/>
            <person name="Lucas S."/>
            <person name="Lapidus A."/>
            <person name="Barry K."/>
            <person name="Detter J.C."/>
            <person name="Glavina del Rio T."/>
            <person name="Hammon N."/>
            <person name="Israni S."/>
            <person name="Dalin E."/>
            <person name="Tice H."/>
            <person name="Pitluck S."/>
            <person name="Chain P."/>
            <person name="Malfatti S."/>
            <person name="Shin M."/>
            <person name="Vergez L."/>
            <person name="Schmutz J."/>
            <person name="Larimer F."/>
            <person name="Land M."/>
            <person name="Hauser L."/>
            <person name="Kyrpides N."/>
            <person name="Lykidis A."/>
            <person name="Parales R."/>
            <person name="Richardson P."/>
        </authorList>
    </citation>
    <scope>NUCLEOTIDE SEQUENCE [LARGE SCALE GENOMIC DNA]</scope>
    <source>
        <strain>ATCC 700007 / DSM 6899 / JCM 31910 / BCRC 17059 / LMG 24140 / F1</strain>
    </source>
</reference>
<name>QUEA_PSEP1</name>
<organism>
    <name type="scientific">Pseudomonas putida (strain ATCC 700007 / DSM 6899 / JCM 31910 / BCRC 17059 / LMG 24140 / F1)</name>
    <dbReference type="NCBI Taxonomy" id="351746"/>
    <lineage>
        <taxon>Bacteria</taxon>
        <taxon>Pseudomonadati</taxon>
        <taxon>Pseudomonadota</taxon>
        <taxon>Gammaproteobacteria</taxon>
        <taxon>Pseudomonadales</taxon>
        <taxon>Pseudomonadaceae</taxon>
        <taxon>Pseudomonas</taxon>
    </lineage>
</organism>
<evidence type="ECO:0000255" key="1">
    <source>
        <dbReference type="HAMAP-Rule" id="MF_00113"/>
    </source>
</evidence>
<gene>
    <name evidence="1" type="primary">queA</name>
    <name type="ordered locus">Pput_0862</name>
</gene>
<feature type="chain" id="PRO_1000015251" description="S-adenosylmethionine:tRNA ribosyltransferase-isomerase">
    <location>
        <begin position="1"/>
        <end position="349"/>
    </location>
</feature>
<keyword id="KW-0963">Cytoplasm</keyword>
<keyword id="KW-0671">Queuosine biosynthesis</keyword>
<keyword id="KW-0949">S-adenosyl-L-methionine</keyword>
<keyword id="KW-0808">Transferase</keyword>
<sequence length="349" mass="38333">MRVADFSFELPDSLIARHPLAERHGSRLLVLDGPTGALAHRQFPDLLDYLRPGDLMVFNNTRVIPARLFGQKASGGKLEVLVERVLDSHRVLAHVRASKAPKVGAVILIDGGGEAEMVARHDTLFELRFTEEVLPLLDRVGHMPLPPYIDRPDEGADRERYQTVYAQRAGAVAAPTAGLHFDEALLEKIADKGVERAFVTLHVGAGTFQPVRVDKIEDHHMHKEWLEVGQDVVDAIEACRARGGRVIAVGTTSVRSLESAARDGVLKAFSGDTDIFIYPGRPFHVVDALVTNFHLPESTLLMLVSAFAGYPETMAAYAAAVEHGYRFFSYGDAMFITRNPAPRGPEDQA</sequence>
<accession>A5VYR4</accession>
<proteinExistence type="inferred from homology"/>
<dbReference type="EC" id="2.4.99.17" evidence="1"/>
<dbReference type="EMBL" id="CP000712">
    <property type="protein sequence ID" value="ABQ77024.1"/>
    <property type="molecule type" value="Genomic_DNA"/>
</dbReference>
<dbReference type="SMR" id="A5VYR4"/>
<dbReference type="KEGG" id="ppf:Pput_0862"/>
<dbReference type="eggNOG" id="COG0809">
    <property type="taxonomic scope" value="Bacteria"/>
</dbReference>
<dbReference type="HOGENOM" id="CLU_039110_1_0_6"/>
<dbReference type="UniPathway" id="UPA00392"/>
<dbReference type="GO" id="GO:0005737">
    <property type="term" value="C:cytoplasm"/>
    <property type="evidence" value="ECO:0007669"/>
    <property type="project" value="UniProtKB-SubCell"/>
</dbReference>
<dbReference type="GO" id="GO:0051075">
    <property type="term" value="F:S-adenosylmethionine:tRNA ribosyltransferase-isomerase activity"/>
    <property type="evidence" value="ECO:0007669"/>
    <property type="project" value="UniProtKB-EC"/>
</dbReference>
<dbReference type="GO" id="GO:0008616">
    <property type="term" value="P:queuosine biosynthetic process"/>
    <property type="evidence" value="ECO:0007669"/>
    <property type="project" value="UniProtKB-UniRule"/>
</dbReference>
<dbReference type="GO" id="GO:0002099">
    <property type="term" value="P:tRNA wobble guanine modification"/>
    <property type="evidence" value="ECO:0007669"/>
    <property type="project" value="TreeGrafter"/>
</dbReference>
<dbReference type="FunFam" id="2.40.10.240:FF:000001">
    <property type="entry name" value="S-adenosylmethionine:tRNA ribosyltransferase-isomerase"/>
    <property type="match status" value="1"/>
</dbReference>
<dbReference type="FunFam" id="3.40.1780.10:FF:000001">
    <property type="entry name" value="S-adenosylmethionine:tRNA ribosyltransferase-isomerase"/>
    <property type="match status" value="1"/>
</dbReference>
<dbReference type="Gene3D" id="2.40.10.240">
    <property type="entry name" value="QueA-like"/>
    <property type="match status" value="1"/>
</dbReference>
<dbReference type="Gene3D" id="3.40.1780.10">
    <property type="entry name" value="QueA-like"/>
    <property type="match status" value="1"/>
</dbReference>
<dbReference type="HAMAP" id="MF_00113">
    <property type="entry name" value="QueA"/>
    <property type="match status" value="1"/>
</dbReference>
<dbReference type="InterPro" id="IPR003699">
    <property type="entry name" value="QueA"/>
</dbReference>
<dbReference type="InterPro" id="IPR042118">
    <property type="entry name" value="QueA_dom1"/>
</dbReference>
<dbReference type="InterPro" id="IPR042119">
    <property type="entry name" value="QueA_dom2"/>
</dbReference>
<dbReference type="InterPro" id="IPR036100">
    <property type="entry name" value="QueA_sf"/>
</dbReference>
<dbReference type="NCBIfam" id="NF001140">
    <property type="entry name" value="PRK00147.1"/>
    <property type="match status" value="1"/>
</dbReference>
<dbReference type="NCBIfam" id="TIGR00113">
    <property type="entry name" value="queA"/>
    <property type="match status" value="1"/>
</dbReference>
<dbReference type="PANTHER" id="PTHR30307">
    <property type="entry name" value="S-ADENOSYLMETHIONINE:TRNA RIBOSYLTRANSFERASE-ISOMERASE"/>
    <property type="match status" value="1"/>
</dbReference>
<dbReference type="PANTHER" id="PTHR30307:SF0">
    <property type="entry name" value="S-ADENOSYLMETHIONINE:TRNA RIBOSYLTRANSFERASE-ISOMERASE"/>
    <property type="match status" value="1"/>
</dbReference>
<dbReference type="Pfam" id="PF02547">
    <property type="entry name" value="Queuosine_synth"/>
    <property type="match status" value="1"/>
</dbReference>
<dbReference type="SUPFAM" id="SSF111337">
    <property type="entry name" value="QueA-like"/>
    <property type="match status" value="1"/>
</dbReference>